<proteinExistence type="evidence at protein level"/>
<evidence type="ECO:0000250" key="1">
    <source>
        <dbReference type="UniProtKB" id="Q57623"/>
    </source>
</evidence>
<evidence type="ECO:0000269" key="2">
    <source>
    </source>
</evidence>
<evidence type="ECO:0000269" key="3">
    <source>
    </source>
</evidence>
<evidence type="ECO:0000269" key="4">
    <source>
    </source>
</evidence>
<evidence type="ECO:0000303" key="5">
    <source>
    </source>
</evidence>
<evidence type="ECO:0000305" key="6"/>
<evidence type="ECO:0000305" key="7">
    <source>
    </source>
</evidence>
<evidence type="ECO:0000312" key="8">
    <source>
        <dbReference type="EMBL" id="CAF30163.1"/>
    </source>
</evidence>
<organism>
    <name type="scientific">Methanococcus maripaludis (strain DSM 14266 / JCM 13030 / NBRC 101832 / S2 / LL)</name>
    <dbReference type="NCBI Taxonomy" id="267377"/>
    <lineage>
        <taxon>Archaea</taxon>
        <taxon>Methanobacteriati</taxon>
        <taxon>Methanobacteriota</taxon>
        <taxon>Methanomada group</taxon>
        <taxon>Methanococci</taxon>
        <taxon>Methanococcales</taxon>
        <taxon>Methanococcaceae</taxon>
        <taxon>Methanococcus</taxon>
    </lineage>
</organism>
<comment type="function">
    <text evidence="2 3">Transcriptional repressor of nitrogen fixation and assimilation genes. Binds to two tandem operators in the glnA and nif promoters, thereby blocking transcription of the genes.</text>
</comment>
<comment type="activity regulation">
    <text evidence="3">Under nitrogen limitation, binding of the intracellular nitrogen metabolite 2-oxoglutarate to NrpR decreases the binding affinity of NrpR to DNA, leading to initiation of transcription.</text>
</comment>
<comment type="subunit">
    <text evidence="2 3">Homotetramer. Binds to a single operator as a dimer and cooperatively to two operators as a dimer pair.</text>
</comment>
<comment type="interaction">
    <interactant intactId="EBI-15891928">
        <id>Q6LZL7</id>
    </interactant>
    <interactant intactId="EBI-15891928">
        <id>Q6LZL7</id>
        <label>nrpR</label>
    </interactant>
    <organismsDiffer>false</organismsDiffer>
    <experiments>2</experiments>
</comment>
<comment type="disruption phenotype">
    <text evidence="2">Disruption results in slower growth with ammonia, but does not affect growth under nitrogen-fixing conditions.</text>
</comment>
<comment type="similarity">
    <text evidence="6">Belongs to the NrpR family.</text>
</comment>
<gene>
    <name evidence="5" type="primary">nrpR</name>
    <name evidence="8" type="ordered locus">MMP0607</name>
</gene>
<dbReference type="EMBL" id="AY157992">
    <property type="protein sequence ID" value="AAN77506.1"/>
    <property type="molecule type" value="Genomic_DNA"/>
</dbReference>
<dbReference type="EMBL" id="BX950229">
    <property type="protein sequence ID" value="CAF30163.1"/>
    <property type="molecule type" value="Genomic_DNA"/>
</dbReference>
<dbReference type="RefSeq" id="WP_011170551.1">
    <property type="nucleotide sequence ID" value="NC_005791.1"/>
</dbReference>
<dbReference type="SMR" id="Q6LZL7"/>
<dbReference type="DIP" id="DIP-59017N"/>
<dbReference type="STRING" id="267377.MMP0607"/>
<dbReference type="DNASU" id="2761666"/>
<dbReference type="EnsemblBacteria" id="CAF30163">
    <property type="protein sequence ID" value="CAF30163"/>
    <property type="gene ID" value="MMP0607"/>
</dbReference>
<dbReference type="GeneID" id="2761666"/>
<dbReference type="KEGG" id="mmp:MMP0607"/>
<dbReference type="PATRIC" id="fig|267377.15.peg.621"/>
<dbReference type="eggNOG" id="arCOG02710">
    <property type="taxonomic scope" value="Archaea"/>
</dbReference>
<dbReference type="HOGENOM" id="CLU_507744_0_0_2"/>
<dbReference type="OrthoDB" id="358798at2157"/>
<dbReference type="Proteomes" id="UP000000590">
    <property type="component" value="Chromosome"/>
</dbReference>
<dbReference type="GO" id="GO:0003677">
    <property type="term" value="F:DNA binding"/>
    <property type="evidence" value="ECO:0007669"/>
    <property type="project" value="UniProtKB-KW"/>
</dbReference>
<dbReference type="GO" id="GO:0042802">
    <property type="term" value="F:identical protein binding"/>
    <property type="evidence" value="ECO:0000353"/>
    <property type="project" value="IntAct"/>
</dbReference>
<dbReference type="Gene3D" id="3.30.70.1360">
    <property type="entry name" value="mj0159-like"/>
    <property type="match status" value="3"/>
</dbReference>
<dbReference type="Gene3D" id="1.10.10.10">
    <property type="entry name" value="Winged helix-like DNA-binding domain superfamily/Winged helix DNA-binding domain"/>
    <property type="match status" value="1"/>
</dbReference>
<dbReference type="InterPro" id="IPR002846">
    <property type="entry name" value="NRD"/>
</dbReference>
<dbReference type="InterPro" id="IPR038982">
    <property type="entry name" value="NrpR"/>
</dbReference>
<dbReference type="InterPro" id="IPR036984">
    <property type="entry name" value="NrpR_dom_sf"/>
</dbReference>
<dbReference type="InterPro" id="IPR013668">
    <property type="entry name" value="RNase_R_HTH_12"/>
</dbReference>
<dbReference type="InterPro" id="IPR036388">
    <property type="entry name" value="WH-like_DNA-bd_sf"/>
</dbReference>
<dbReference type="PANTHER" id="PTHR41964">
    <property type="entry name" value="GLOBAL NITROGEN REGULATOR NRPR"/>
    <property type="match status" value="1"/>
</dbReference>
<dbReference type="PANTHER" id="PTHR41964:SF1">
    <property type="entry name" value="GLOBAL NITROGEN REGULATOR NRPR"/>
    <property type="match status" value="1"/>
</dbReference>
<dbReference type="Pfam" id="PF08461">
    <property type="entry name" value="HTH_12"/>
    <property type="match status" value="1"/>
</dbReference>
<dbReference type="Pfam" id="PF01995">
    <property type="entry name" value="NRD1_2"/>
    <property type="match status" value="2"/>
</dbReference>
<protein>
    <recommendedName>
        <fullName evidence="6">Global nitrogen regulator NrpR</fullName>
    </recommendedName>
    <alternativeName>
        <fullName evidence="5">Nitrogen regulatory protein R</fullName>
    </alternativeName>
</protein>
<keyword id="KW-0903">Direct protein sequencing</keyword>
<keyword id="KW-0238">DNA-binding</keyword>
<keyword id="KW-1185">Reference proteome</keyword>
<keyword id="KW-0677">Repeat</keyword>
<keyword id="KW-0678">Repressor</keyword>
<keyword id="KW-0804">Transcription</keyword>
<keyword id="KW-0805">Transcription regulation</keyword>
<name>NRPR_METMP</name>
<reference key="1">
    <citation type="journal article" date="2003" name="Mol. Microbiol.">
        <title>A novel repressor of nif and glnA expression in the methanogenic archaeon Methanococcus maripaludis.</title>
        <authorList>
            <person name="Lie T.J."/>
            <person name="Leigh J.A."/>
        </authorList>
    </citation>
    <scope>NUCLEOTIDE SEQUENCE [GENOMIC DNA]</scope>
    <scope>PROTEIN SEQUENCE OF 1-14</scope>
    <scope>FUNCTION</scope>
    <scope>DNA-BINDING</scope>
    <scope>SUBUNIT</scope>
    <scope>DISRUPTION PHENOTYPE</scope>
    <source>
        <strain>DSM 14266 / JCM 13030 / NBRC 101832 / S2 / LL</strain>
    </source>
</reference>
<reference key="2">
    <citation type="journal article" date="2004" name="J. Bacteriol.">
        <title>Complete genome sequence of the genetically tractable hydrogenotrophic methanogen Methanococcus maripaludis.</title>
        <authorList>
            <person name="Hendrickson E.L."/>
            <person name="Kaul R."/>
            <person name="Zhou Y."/>
            <person name="Bovee D."/>
            <person name="Chapman P."/>
            <person name="Chung J."/>
            <person name="Conway de Macario E."/>
            <person name="Dodsworth J.A."/>
            <person name="Gillett W."/>
            <person name="Graham D.E."/>
            <person name="Hackett M."/>
            <person name="Haydock A.K."/>
            <person name="Kang A."/>
            <person name="Land M.L."/>
            <person name="Levy R."/>
            <person name="Lie T.J."/>
            <person name="Major T.A."/>
            <person name="Moore B.C."/>
            <person name="Porat I."/>
            <person name="Palmeiri A."/>
            <person name="Rouse G."/>
            <person name="Saenphimmachak C."/>
            <person name="Soell D."/>
            <person name="Van Dien S."/>
            <person name="Wang T."/>
            <person name="Whitman W.B."/>
            <person name="Xia Q."/>
            <person name="Zhang Y."/>
            <person name="Larimer F.W."/>
            <person name="Olson M.V."/>
            <person name="Leigh J.A."/>
        </authorList>
    </citation>
    <scope>NUCLEOTIDE SEQUENCE [LARGE SCALE GENOMIC DNA]</scope>
    <source>
        <strain>DSM 14266 / JCM 13030 / NBRC 101832 / S2 / LL</strain>
    </source>
</reference>
<reference key="3">
    <citation type="journal article" date="2005" name="J. Biol. Chem.">
        <title>Regulation of nif expression in Methanococcus maripaludis: roles of the euryarchaeal repressor NrpR, 2-oxoglutarate, and two operators.</title>
        <authorList>
            <person name="Lie T.J."/>
            <person name="Wood G.E."/>
            <person name="Leigh J.A."/>
        </authorList>
    </citation>
    <scope>FUNCTION</scope>
    <scope>DNA-BINDING</scope>
    <scope>ACTIVITY REGULATION</scope>
    <scope>SUBUNIT</scope>
    <source>
        <strain>DSM 14266 / JCM 13030 / NBRC 101832 / S2 / LL</strain>
    </source>
</reference>
<reference key="4">
    <citation type="journal article" date="2007" name="Appl. Environ. Microbiol.">
        <title>Genetic screen for regulatory mutations in Methanococcus maripaludis and its use in identification of induction-deficient mutants of the euryarchaeal repressor NrpR.</title>
        <authorList>
            <person name="Lie T.J."/>
            <person name="Leigh J.A."/>
        </authorList>
    </citation>
    <scope>MUTAGENESIS OF CYS-148; LEU-195; CYS-389 AND HIS-435</scope>
</reference>
<accession>Q6LZL7</accession>
<accession>Q8J2Z0</accession>
<sequence>MDSNIDVEILSILSEASAPVGAKIIADSLKDRGYDIGERAVRYHLKVLDENSLTKKLGYSGREITEKGIEELEKANISFRIGSVFSQVIEKLYLSDFPSKVLINTAKFEGDYKTIKEMVLRSFEAGYSVGDYLNIKKKGNTVSVETLCSITFDNFLLKNGIIPTPEYGGIVKFEDYEPVNFEGVIDFKSSSIDPLVAFIMQGKTDVIGVIENGEGLVPANFRVIPKSSEKQFETILKKDMLNSVLAYGTENVLGMNLNPEQIGVVLVGGLTPLCVPHESGYTADISAATQLKDISSMEKKTKGFLEAKKKKGKFKVTPVLSKMLSKMQTINYDIEDKKGNVVVNTAKIPIEYKEEAINALKDSYENKLAISDRLKVECDDKFLNAYTICSLTVDGVFLKNKIPVIPYYGGILEVKADKKRFIEAIDYEGTSLDPHEVFFNKADGKNYILAGIRKVPMSASEKLIELNEKLGWNSIIEIGRPNNDICGVRVEKCMFGITTIGGTNPFANIRKNNIPVEMKTLHKSIDYSELTHYDDI</sequence>
<feature type="chain" id="PRO_0000431494" description="Global nitrogen regulator NrpR">
    <location>
        <begin position="1"/>
        <end position="536"/>
    </location>
</feature>
<feature type="region of interest" description="Winged helix-turn-helix" evidence="1">
    <location>
        <begin position="7"/>
        <end position="72"/>
    </location>
</feature>
<feature type="region of interest" description="NRD 1" evidence="1">
    <location>
        <begin position="80"/>
        <end position="314"/>
    </location>
</feature>
<feature type="region of interest" description="NRD 2" evidence="1">
    <location>
        <begin position="315"/>
        <end position="536"/>
    </location>
</feature>
<feature type="mutagenesis site" description="Decreases response to 2-oxoglutarate." evidence="4">
    <original>C</original>
    <variation>A</variation>
    <location>
        <position position="148"/>
    </location>
</feature>
<feature type="mutagenesis site" description="Decreases response to 2-oxoglutarate." evidence="4">
    <original>L</original>
    <variation>A</variation>
    <location>
        <position position="195"/>
    </location>
</feature>
<feature type="mutagenesis site" description="Decreases response to 2-oxoglutarate." evidence="4">
    <original>C</original>
    <variation>A</variation>
    <location>
        <position position="389"/>
    </location>
</feature>
<feature type="mutagenesis site" description="Decreases response to 2-oxoglutarate." evidence="4">
    <original>H</original>
    <variation>A</variation>
    <location>
        <position position="435"/>
    </location>
</feature>
<feature type="sequence conflict" description="In Ref. 1; AA sequence." evidence="7" ref="1">
    <original>S</original>
    <variation>K</variation>
    <location>
        <position position="14"/>
    </location>
</feature>